<protein>
    <recommendedName>
        <fullName>Uteroferrin-associated basic protein 2</fullName>
        <shortName>UABP-2</shortName>
    </recommendedName>
</protein>
<reference key="1">
    <citation type="submission" date="1991-10" db="EMBL/GenBank/DDBJ databases">
        <authorList>
            <person name="Mathialagan N."/>
            <person name="Malathy P.V."/>
            <person name="Roberts R.M."/>
        </authorList>
    </citation>
    <scope>NUCLEOTIDE SEQUENCE [MRNA]</scope>
    <source>
        <tissue>Endometrium</tissue>
    </source>
</reference>
<organism>
    <name type="scientific">Sus scrofa</name>
    <name type="common">Pig</name>
    <dbReference type="NCBI Taxonomy" id="9823"/>
    <lineage>
        <taxon>Eukaryota</taxon>
        <taxon>Metazoa</taxon>
        <taxon>Chordata</taxon>
        <taxon>Craniata</taxon>
        <taxon>Vertebrata</taxon>
        <taxon>Euteleostomi</taxon>
        <taxon>Mammalia</taxon>
        <taxon>Eutheria</taxon>
        <taxon>Laurasiatheria</taxon>
        <taxon>Artiodactyla</taxon>
        <taxon>Suina</taxon>
        <taxon>Suidae</taxon>
        <taxon>Sus</taxon>
    </lineage>
</organism>
<proteinExistence type="evidence at transcript level"/>
<keyword id="KW-0325">Glycoprotein</keyword>
<keyword id="KW-0635">Pregnancy</keyword>
<keyword id="KW-0646">Protease inhibitor</keyword>
<keyword id="KW-1185">Reference proteome</keyword>
<keyword id="KW-0964">Secreted</keyword>
<keyword id="KW-0722">Serine protease inhibitor</keyword>
<keyword id="KW-0732">Signal</keyword>
<accession>P46202</accession>
<feature type="signal peptide" evidence="2">
    <location>
        <begin position="1"/>
        <end position="25"/>
    </location>
</feature>
<feature type="chain" id="PRO_0000032535" description="Uteroferrin-associated basic protein 2">
    <location>
        <begin position="26"/>
        <end position="420"/>
    </location>
</feature>
<feature type="site" description="Reactive bond" evidence="1">
    <location>
        <begin position="381"/>
        <end position="382"/>
    </location>
</feature>
<feature type="glycosylation site" description="N-linked (GlcNAc...) asparagine" evidence="2">
    <location>
        <position position="225"/>
    </location>
</feature>
<feature type="glycosylation site" description="N-linked (GlcNAc...) asparagine" evidence="2">
    <location>
        <position position="271"/>
    </location>
</feature>
<feature type="glycosylation site" description="N-linked (GlcNAc...) asparagine" evidence="2">
    <location>
        <position position="343"/>
    </location>
</feature>
<evidence type="ECO:0000250" key="1"/>
<evidence type="ECO:0000255" key="2"/>
<evidence type="ECO:0000305" key="3"/>
<name>UFAP2_PIG</name>
<comment type="subcellular location">
    <subcellularLocation>
        <location evidence="3">Secreted</location>
        <location evidence="3">Extracellular space</location>
    </subcellularLocation>
</comment>
<comment type="similarity">
    <text evidence="3">Belongs to the serpin family. UTMP subfamily.</text>
</comment>
<sequence length="420" mass="48663">MSHGKMPLVLSLVLILCGLFNSISCEKQQTSPKTITPVSFKRIAALSQKMEANYKAFAQELFKTLLIEDPRKNMIFSPVSISISLATLSLGLRSATRTNAIDVLERDLRNLRVWDKHQALQHLVEMLHELEKKKQLKHKDIFFIDRNKKMNQMFLKEIDRVYKVDIQMIDFKDKEKTKKAINQFVADKIDKKAKNLITHLDPQTLLCLVNYVFFKGILERAFQTNLTKKEDFFVNEKTIVQVDMMRKTERMIYSRSEELLATMVKMPCKENASIILVLPDTGKFDFALKEMAAKRARLQKTNELQIGALSCAQDQDHLQDRFKHLLPKIGINDIFTTKAVTWNTTRTSTILEAVHHAVIEVKEDGLTKNAAKDKDFWKVPVDKKEVPVVVKFDRPFFLFVEDEITRRDLFVAKVFNPKTE</sequence>
<dbReference type="EMBL" id="X62845">
    <property type="protein sequence ID" value="CAA44663.1"/>
    <property type="molecule type" value="mRNA"/>
</dbReference>
<dbReference type="PIR" id="S19208">
    <property type="entry name" value="S19208"/>
</dbReference>
<dbReference type="RefSeq" id="NP_999010.1">
    <property type="nucleotide sequence ID" value="NM_213845.1"/>
</dbReference>
<dbReference type="SMR" id="P46202"/>
<dbReference type="STRING" id="9823.ENSSSCP00000002687"/>
<dbReference type="MEROPS" id="I04.981"/>
<dbReference type="GlyGen" id="P46202">
    <property type="glycosylation" value="3 sites"/>
</dbReference>
<dbReference type="PaxDb" id="9823-ENSSSCP00000002687"/>
<dbReference type="GeneID" id="396843"/>
<dbReference type="KEGG" id="ssc:396843"/>
<dbReference type="CTD" id="396843"/>
<dbReference type="eggNOG" id="KOG2392">
    <property type="taxonomic scope" value="Eukaryota"/>
</dbReference>
<dbReference type="InParanoid" id="P46202"/>
<dbReference type="OrthoDB" id="671595at2759"/>
<dbReference type="Proteomes" id="UP000008227">
    <property type="component" value="Unplaced"/>
</dbReference>
<dbReference type="Proteomes" id="UP000314985">
    <property type="component" value="Unplaced"/>
</dbReference>
<dbReference type="Proteomes" id="UP000694570">
    <property type="component" value="Unplaced"/>
</dbReference>
<dbReference type="Proteomes" id="UP000694571">
    <property type="component" value="Unplaced"/>
</dbReference>
<dbReference type="Proteomes" id="UP000694720">
    <property type="component" value="Unplaced"/>
</dbReference>
<dbReference type="Proteomes" id="UP000694722">
    <property type="component" value="Unplaced"/>
</dbReference>
<dbReference type="Proteomes" id="UP000694723">
    <property type="component" value="Unplaced"/>
</dbReference>
<dbReference type="Proteomes" id="UP000694724">
    <property type="component" value="Unplaced"/>
</dbReference>
<dbReference type="Proteomes" id="UP000694725">
    <property type="component" value="Unplaced"/>
</dbReference>
<dbReference type="Proteomes" id="UP000694726">
    <property type="component" value="Unplaced"/>
</dbReference>
<dbReference type="Proteomes" id="UP000694727">
    <property type="component" value="Unplaced"/>
</dbReference>
<dbReference type="Proteomes" id="UP000694728">
    <property type="component" value="Unplaced"/>
</dbReference>
<dbReference type="GO" id="GO:0005615">
    <property type="term" value="C:extracellular space"/>
    <property type="evidence" value="ECO:0000318"/>
    <property type="project" value="GO_Central"/>
</dbReference>
<dbReference type="GO" id="GO:0004867">
    <property type="term" value="F:serine-type endopeptidase inhibitor activity"/>
    <property type="evidence" value="ECO:0000318"/>
    <property type="project" value="GO_Central"/>
</dbReference>
<dbReference type="GO" id="GO:0007565">
    <property type="term" value="P:female pregnancy"/>
    <property type="evidence" value="ECO:0007669"/>
    <property type="project" value="UniProtKB-KW"/>
</dbReference>
<dbReference type="CDD" id="cd19559">
    <property type="entry name" value="serpinA14_UTMP_UABP-2"/>
    <property type="match status" value="1"/>
</dbReference>
<dbReference type="Gene3D" id="2.30.39.10">
    <property type="entry name" value="Alpha-1-antitrypsin, domain 1"/>
    <property type="match status" value="1"/>
</dbReference>
<dbReference type="Gene3D" id="3.30.497.10">
    <property type="entry name" value="Antithrombin, subunit I, domain 2"/>
    <property type="match status" value="1"/>
</dbReference>
<dbReference type="InterPro" id="IPR023795">
    <property type="entry name" value="Serpin_CS"/>
</dbReference>
<dbReference type="InterPro" id="IPR023796">
    <property type="entry name" value="Serpin_dom"/>
</dbReference>
<dbReference type="InterPro" id="IPR000215">
    <property type="entry name" value="Serpin_fam"/>
</dbReference>
<dbReference type="InterPro" id="IPR036186">
    <property type="entry name" value="Serpin_sf"/>
</dbReference>
<dbReference type="InterPro" id="IPR042178">
    <property type="entry name" value="Serpin_sf_1"/>
</dbReference>
<dbReference type="InterPro" id="IPR042185">
    <property type="entry name" value="Serpin_sf_2"/>
</dbReference>
<dbReference type="PANTHER" id="PTHR11461">
    <property type="entry name" value="SERINE PROTEASE INHIBITOR, SERPIN"/>
    <property type="match status" value="1"/>
</dbReference>
<dbReference type="PANTHER" id="PTHR11461:SF164">
    <property type="entry name" value="UTEROFERRIN-ASSOCIATED PROTEIN"/>
    <property type="match status" value="1"/>
</dbReference>
<dbReference type="Pfam" id="PF00079">
    <property type="entry name" value="Serpin"/>
    <property type="match status" value="1"/>
</dbReference>
<dbReference type="SMART" id="SM00093">
    <property type="entry name" value="SERPIN"/>
    <property type="match status" value="1"/>
</dbReference>
<dbReference type="SUPFAM" id="SSF56574">
    <property type="entry name" value="Serpins"/>
    <property type="match status" value="1"/>
</dbReference>
<dbReference type="PROSITE" id="PS00284">
    <property type="entry name" value="SERPIN"/>
    <property type="match status" value="1"/>
</dbReference>